<sequence length="408" mass="43817">MSLSVTRENFDEWMVPVYVPAPFIPVRGEGSRLWDQQGKEYIDFAGGIAVNALGHAHPALREALNEQANRFWHTGNGYTNEPALRLAKKLIDATFAERVFFCNSGAEANEAALKLARKYAHDRVGNHKSGIVAFKNAFHGRTLFTVSAGGQPTYSQDFAPLPPDIRHAAYNDLNSASALIDDNTCAVIVEPVQGEGGVIPATKAFLQGLRELCDRYQALLIFDEVQTGVGRTGELYAYMHYGVTPDILTTAKALGGGFPIGAMLTTQNYASVMTPGTHGTTYGGNPLATAVAGKVLDIINTPEMQNGVRQRHDAFIERLNTLNVRFGMFSEIRGLGLLLGCVLQTEFAGKAKLIAQEAAKAGVMVLIAGGDVVRFAPALNVSDEEIATGLDRFALACERLQTGGAPCG</sequence>
<name>ASTC_SALNS</name>
<evidence type="ECO:0000255" key="1">
    <source>
        <dbReference type="HAMAP-Rule" id="MF_01173"/>
    </source>
</evidence>
<organism>
    <name type="scientific">Salmonella newport (strain SL254)</name>
    <dbReference type="NCBI Taxonomy" id="423368"/>
    <lineage>
        <taxon>Bacteria</taxon>
        <taxon>Pseudomonadati</taxon>
        <taxon>Pseudomonadota</taxon>
        <taxon>Gammaproteobacteria</taxon>
        <taxon>Enterobacterales</taxon>
        <taxon>Enterobacteriaceae</taxon>
        <taxon>Salmonella</taxon>
    </lineage>
</organism>
<accession>B4T3Z4</accession>
<reference key="1">
    <citation type="journal article" date="2011" name="J. Bacteriol.">
        <title>Comparative genomics of 28 Salmonella enterica isolates: evidence for CRISPR-mediated adaptive sublineage evolution.</title>
        <authorList>
            <person name="Fricke W.F."/>
            <person name="Mammel M.K."/>
            <person name="McDermott P.F."/>
            <person name="Tartera C."/>
            <person name="White D.G."/>
            <person name="Leclerc J.E."/>
            <person name="Ravel J."/>
            <person name="Cebula T.A."/>
        </authorList>
    </citation>
    <scope>NUCLEOTIDE SEQUENCE [LARGE SCALE GENOMIC DNA]</scope>
    <source>
        <strain>SL254</strain>
    </source>
</reference>
<feature type="chain" id="PRO_1000164394" description="Succinylornithine transaminase">
    <location>
        <begin position="1"/>
        <end position="408"/>
    </location>
</feature>
<feature type="modified residue" description="N6-(pyridoxal phosphate)lysine" evidence="1">
    <location>
        <position position="252"/>
    </location>
</feature>
<proteinExistence type="inferred from homology"/>
<dbReference type="EC" id="2.6.1.81" evidence="1"/>
<dbReference type="EMBL" id="CP001113">
    <property type="protein sequence ID" value="ACF63773.1"/>
    <property type="molecule type" value="Genomic_DNA"/>
</dbReference>
<dbReference type="RefSeq" id="WP_000059510.1">
    <property type="nucleotide sequence ID" value="NZ_CCMR01000003.1"/>
</dbReference>
<dbReference type="SMR" id="B4T3Z4"/>
<dbReference type="KEGG" id="see:SNSL254_A1415"/>
<dbReference type="HOGENOM" id="CLU_016922_10_1_6"/>
<dbReference type="UniPathway" id="UPA00185">
    <property type="reaction ID" value="UER00281"/>
</dbReference>
<dbReference type="Proteomes" id="UP000008824">
    <property type="component" value="Chromosome"/>
</dbReference>
<dbReference type="GO" id="GO:0042802">
    <property type="term" value="F:identical protein binding"/>
    <property type="evidence" value="ECO:0007669"/>
    <property type="project" value="TreeGrafter"/>
</dbReference>
<dbReference type="GO" id="GO:0030170">
    <property type="term" value="F:pyridoxal phosphate binding"/>
    <property type="evidence" value="ECO:0007669"/>
    <property type="project" value="UniProtKB-UniRule"/>
</dbReference>
<dbReference type="GO" id="GO:0043825">
    <property type="term" value="F:succinylornithine transaminase activity"/>
    <property type="evidence" value="ECO:0007669"/>
    <property type="project" value="UniProtKB-EC"/>
</dbReference>
<dbReference type="GO" id="GO:1901607">
    <property type="term" value="P:alpha-amino acid biosynthetic process"/>
    <property type="evidence" value="ECO:0007669"/>
    <property type="project" value="UniProtKB-ARBA"/>
</dbReference>
<dbReference type="GO" id="GO:0019544">
    <property type="term" value="P:arginine catabolic process to glutamate"/>
    <property type="evidence" value="ECO:0007669"/>
    <property type="project" value="UniProtKB-UniRule"/>
</dbReference>
<dbReference type="GO" id="GO:0019545">
    <property type="term" value="P:arginine catabolic process to succinate"/>
    <property type="evidence" value="ECO:0007669"/>
    <property type="project" value="UniProtKB-UniRule"/>
</dbReference>
<dbReference type="GO" id="GO:0006593">
    <property type="term" value="P:ornithine catabolic process"/>
    <property type="evidence" value="ECO:0007669"/>
    <property type="project" value="InterPro"/>
</dbReference>
<dbReference type="CDD" id="cd00610">
    <property type="entry name" value="OAT_like"/>
    <property type="match status" value="1"/>
</dbReference>
<dbReference type="FunFam" id="3.40.640.10:FF:000004">
    <property type="entry name" value="Acetylornithine aminotransferase"/>
    <property type="match status" value="1"/>
</dbReference>
<dbReference type="Gene3D" id="3.90.1150.10">
    <property type="entry name" value="Aspartate Aminotransferase, domain 1"/>
    <property type="match status" value="1"/>
</dbReference>
<dbReference type="Gene3D" id="3.40.640.10">
    <property type="entry name" value="Type I PLP-dependent aspartate aminotransferase-like (Major domain)"/>
    <property type="match status" value="1"/>
</dbReference>
<dbReference type="HAMAP" id="MF_01107">
    <property type="entry name" value="ArgD_aminotrans_3"/>
    <property type="match status" value="1"/>
</dbReference>
<dbReference type="HAMAP" id="MF_01173">
    <property type="entry name" value="AstC_aminotrans_3"/>
    <property type="match status" value="1"/>
</dbReference>
<dbReference type="InterPro" id="IPR017652">
    <property type="entry name" value="Ac/SucOrn_transaminase_bac"/>
</dbReference>
<dbReference type="InterPro" id="IPR004636">
    <property type="entry name" value="AcOrn/SuccOrn_fam"/>
</dbReference>
<dbReference type="InterPro" id="IPR005814">
    <property type="entry name" value="Aminotrans_3"/>
</dbReference>
<dbReference type="InterPro" id="IPR049704">
    <property type="entry name" value="Aminotrans_3_PPA_site"/>
</dbReference>
<dbReference type="InterPro" id="IPR050103">
    <property type="entry name" value="Class-III_PLP-dep_AT"/>
</dbReference>
<dbReference type="InterPro" id="IPR015424">
    <property type="entry name" value="PyrdxlP-dep_Trfase"/>
</dbReference>
<dbReference type="InterPro" id="IPR015421">
    <property type="entry name" value="PyrdxlP-dep_Trfase_major"/>
</dbReference>
<dbReference type="InterPro" id="IPR015422">
    <property type="entry name" value="PyrdxlP-dep_Trfase_small"/>
</dbReference>
<dbReference type="InterPro" id="IPR001763">
    <property type="entry name" value="Rhodanese-like_dom"/>
</dbReference>
<dbReference type="InterPro" id="IPR026330">
    <property type="entry name" value="SOAT"/>
</dbReference>
<dbReference type="NCBIfam" id="TIGR03246">
    <property type="entry name" value="arg_catab_astC"/>
    <property type="match status" value="1"/>
</dbReference>
<dbReference type="NCBIfam" id="TIGR00707">
    <property type="entry name" value="argD"/>
    <property type="match status" value="1"/>
</dbReference>
<dbReference type="NCBIfam" id="NF002325">
    <property type="entry name" value="PRK01278.1"/>
    <property type="match status" value="1"/>
</dbReference>
<dbReference type="NCBIfam" id="NF003468">
    <property type="entry name" value="PRK05093.1"/>
    <property type="match status" value="1"/>
</dbReference>
<dbReference type="NCBIfam" id="NF009047">
    <property type="entry name" value="PRK12381.1"/>
    <property type="match status" value="1"/>
</dbReference>
<dbReference type="PANTHER" id="PTHR11986">
    <property type="entry name" value="AMINOTRANSFERASE CLASS III"/>
    <property type="match status" value="1"/>
</dbReference>
<dbReference type="PANTHER" id="PTHR11986:SF113">
    <property type="entry name" value="SUCCINYLORNITHINE TRANSAMINASE"/>
    <property type="match status" value="1"/>
</dbReference>
<dbReference type="Pfam" id="PF00202">
    <property type="entry name" value="Aminotran_3"/>
    <property type="match status" value="1"/>
</dbReference>
<dbReference type="PIRSF" id="PIRSF000521">
    <property type="entry name" value="Transaminase_4ab_Lys_Orn"/>
    <property type="match status" value="1"/>
</dbReference>
<dbReference type="SUPFAM" id="SSF53383">
    <property type="entry name" value="PLP-dependent transferases"/>
    <property type="match status" value="1"/>
</dbReference>
<dbReference type="PROSITE" id="PS00600">
    <property type="entry name" value="AA_TRANSFER_CLASS_3"/>
    <property type="match status" value="1"/>
</dbReference>
<gene>
    <name evidence="1" type="primary">astC</name>
    <name evidence="1" type="synonym">argM</name>
    <name type="ordered locus">SNSL254_A1415</name>
</gene>
<keyword id="KW-0032">Aminotransferase</keyword>
<keyword id="KW-0056">Arginine metabolism</keyword>
<keyword id="KW-0663">Pyridoxal phosphate</keyword>
<keyword id="KW-0808">Transferase</keyword>
<comment type="function">
    <text evidence="1">Catalyzes the transamination of N(2)-succinylornithine and alpha-ketoglutarate into N(2)-succinylglutamate semialdehyde and glutamate. Can also act as an acetylornithine aminotransferase.</text>
</comment>
<comment type="catalytic activity">
    <reaction evidence="1">
        <text>N(2)-succinyl-L-ornithine + 2-oxoglutarate = N-succinyl-L-glutamate 5-semialdehyde + L-glutamate</text>
        <dbReference type="Rhea" id="RHEA:16953"/>
        <dbReference type="ChEBI" id="CHEBI:16810"/>
        <dbReference type="ChEBI" id="CHEBI:29985"/>
        <dbReference type="ChEBI" id="CHEBI:58514"/>
        <dbReference type="ChEBI" id="CHEBI:58520"/>
        <dbReference type="EC" id="2.6.1.81"/>
    </reaction>
</comment>
<comment type="cofactor">
    <cofactor evidence="1">
        <name>pyridoxal 5'-phosphate</name>
        <dbReference type="ChEBI" id="CHEBI:597326"/>
    </cofactor>
</comment>
<comment type="pathway">
    <text evidence="1">Amino-acid degradation; L-arginine degradation via AST pathway; L-glutamate and succinate from L-arginine: step 3/5.</text>
</comment>
<comment type="similarity">
    <text evidence="1">Belongs to the class-III pyridoxal-phosphate-dependent aminotransferase family. AstC subfamily.</text>
</comment>
<protein>
    <recommendedName>
        <fullName evidence="1">Succinylornithine transaminase</fullName>
        <ecNumber evidence="1">2.6.1.81</ecNumber>
    </recommendedName>
    <alternativeName>
        <fullName evidence="1">Succinylornithine aminotransferase</fullName>
    </alternativeName>
</protein>